<evidence type="ECO:0000250" key="1"/>
<evidence type="ECO:0000255" key="2"/>
<evidence type="ECO:0000255" key="3">
    <source>
        <dbReference type="PROSITE-ProRule" id="PRU00289"/>
    </source>
</evidence>
<evidence type="ECO:0000256" key="4">
    <source>
        <dbReference type="SAM" id="MobiDB-lite"/>
    </source>
</evidence>
<evidence type="ECO:0000305" key="5"/>
<keyword id="KW-0067">ATP-binding</keyword>
<keyword id="KW-0131">Cell cycle</keyword>
<keyword id="KW-0132">Cell division</keyword>
<keyword id="KW-0997">Cell inner membrane</keyword>
<keyword id="KW-1003">Cell membrane</keyword>
<keyword id="KW-0159">Chromosome partition</keyword>
<keyword id="KW-0238">DNA-binding</keyword>
<keyword id="KW-0472">Membrane</keyword>
<keyword id="KW-0547">Nucleotide-binding</keyword>
<keyword id="KW-1185">Reference proteome</keyword>
<keyword id="KW-0812">Transmembrane</keyword>
<keyword id="KW-1133">Transmembrane helix</keyword>
<accession>Q8EER3</accession>
<proteinExistence type="inferred from homology"/>
<protein>
    <recommendedName>
        <fullName>DNA translocase FtsK</fullName>
    </recommendedName>
</protein>
<comment type="function">
    <text evidence="1">Essential cell division protein that coordinates cell division and chromosome segregation. The N-terminus is involved in assembly of the cell-division machinery. The C-terminus functions as a DNA motor that moves dsDNA in an ATP-dependent manner towards the dif recombination site, which is located within the replication terminus region. Translocation stops specifically at Xer-dif sites, where FtsK interacts with the Xer recombinase, allowing activation of chromosome unlinking by recombination. FtsK orienting polar sequences (KOPS) guide the direction of DNA translocation. FtsK can remove proteins from DNA as it translocates, but translocation stops specifically at XerCD-dif site, thereby preventing removal of XerC and XerD from dif (By similarity).</text>
</comment>
<comment type="subunit">
    <text evidence="1">Homohexamer. Forms a ring that surrounds DNA (By similarity).</text>
</comment>
<comment type="subcellular location">
    <subcellularLocation>
        <location evidence="1">Cell inner membrane</location>
        <topology evidence="1">Multi-pass membrane protein</topology>
    </subcellularLocation>
    <text evidence="1">Located at the septum.</text>
</comment>
<comment type="domain">
    <text evidence="1">Consists of an N-terminal domain, which is sufficient for the localization to the septal ring and is required for cell division, followed by a linker domain, and a C-terminal domain, which forms the translocation motor involved in chromosome segregation. The C-terminal domain can be further subdivided into alpha, beta and gamma subdomains. The alpha and beta subdomains multimerise to produce a hexameric ring, contain the nucleotide binding motif and form the DNA pump. The gamma subdomain is a regulatory subdomain that controls translocation of DNA by recognition of KOPS motifs and interacts with XerD recombinase (By similarity).</text>
</comment>
<comment type="similarity">
    <text evidence="5">Belongs to the FtsK/SpoIIIE/SftA family.</text>
</comment>
<organism>
    <name type="scientific">Shewanella oneidensis (strain ATCC 700550 / JCM 31522 / CIP 106686 / LMG 19005 / NCIMB 14063 / MR-1)</name>
    <dbReference type="NCBI Taxonomy" id="211586"/>
    <lineage>
        <taxon>Bacteria</taxon>
        <taxon>Pseudomonadati</taxon>
        <taxon>Pseudomonadota</taxon>
        <taxon>Gammaproteobacteria</taxon>
        <taxon>Alteromonadales</taxon>
        <taxon>Shewanellaceae</taxon>
        <taxon>Shewanella</taxon>
    </lineage>
</organism>
<dbReference type="EMBL" id="AE014299">
    <property type="protein sequence ID" value="AAN55345.1"/>
    <property type="molecule type" value="Genomic_DNA"/>
</dbReference>
<dbReference type="RefSeq" id="NP_717901.1">
    <property type="nucleotide sequence ID" value="NC_004347.2"/>
</dbReference>
<dbReference type="RefSeq" id="WP_011072306.1">
    <property type="nucleotide sequence ID" value="NC_004347.2"/>
</dbReference>
<dbReference type="SMR" id="Q8EER3"/>
<dbReference type="STRING" id="211586.SO_2306"/>
<dbReference type="PaxDb" id="211586-SO_2306"/>
<dbReference type="KEGG" id="son:SO_2306"/>
<dbReference type="PATRIC" id="fig|211586.12.peg.2221"/>
<dbReference type="eggNOG" id="COG0531">
    <property type="taxonomic scope" value="Bacteria"/>
</dbReference>
<dbReference type="eggNOG" id="COG1674">
    <property type="taxonomic scope" value="Bacteria"/>
</dbReference>
<dbReference type="HOGENOM" id="CLU_001981_7_1_6"/>
<dbReference type="OrthoDB" id="9807790at2"/>
<dbReference type="PhylomeDB" id="Q8EER3"/>
<dbReference type="BioCyc" id="SONE211586:G1GMP-2108-MONOMER"/>
<dbReference type="Proteomes" id="UP000008186">
    <property type="component" value="Chromosome"/>
</dbReference>
<dbReference type="GO" id="GO:0005886">
    <property type="term" value="C:plasma membrane"/>
    <property type="evidence" value="ECO:0007669"/>
    <property type="project" value="UniProtKB-SubCell"/>
</dbReference>
<dbReference type="GO" id="GO:0005524">
    <property type="term" value="F:ATP binding"/>
    <property type="evidence" value="ECO:0007669"/>
    <property type="project" value="UniProtKB-KW"/>
</dbReference>
<dbReference type="GO" id="GO:0003677">
    <property type="term" value="F:DNA binding"/>
    <property type="evidence" value="ECO:0007669"/>
    <property type="project" value="UniProtKB-KW"/>
</dbReference>
<dbReference type="GO" id="GO:0015616">
    <property type="term" value="F:DNA translocase activity"/>
    <property type="evidence" value="ECO:0000318"/>
    <property type="project" value="GO_Central"/>
</dbReference>
<dbReference type="GO" id="GO:0051301">
    <property type="term" value="P:cell division"/>
    <property type="evidence" value="ECO:0007669"/>
    <property type="project" value="UniProtKB-KW"/>
</dbReference>
<dbReference type="GO" id="GO:0007059">
    <property type="term" value="P:chromosome segregation"/>
    <property type="evidence" value="ECO:0007669"/>
    <property type="project" value="UniProtKB-KW"/>
</dbReference>
<dbReference type="CDD" id="cd01127">
    <property type="entry name" value="TrwB_TraG_TraD_VirD4"/>
    <property type="match status" value="1"/>
</dbReference>
<dbReference type="FunFam" id="3.40.50.300:FF:000209">
    <property type="entry name" value="Cell division protein FtsK"/>
    <property type="match status" value="1"/>
</dbReference>
<dbReference type="Gene3D" id="3.30.980.40">
    <property type="match status" value="1"/>
</dbReference>
<dbReference type="Gene3D" id="3.40.50.300">
    <property type="entry name" value="P-loop containing nucleotide triphosphate hydrolases"/>
    <property type="match status" value="1"/>
</dbReference>
<dbReference type="Gene3D" id="1.10.10.10">
    <property type="entry name" value="Winged helix-like DNA-binding domain superfamily/Winged helix DNA-binding domain"/>
    <property type="match status" value="1"/>
</dbReference>
<dbReference type="InterPro" id="IPR050206">
    <property type="entry name" value="FtsK/SpoIIIE/SftA"/>
</dbReference>
<dbReference type="InterPro" id="IPR025199">
    <property type="entry name" value="FtsK_4TM"/>
</dbReference>
<dbReference type="InterPro" id="IPR041027">
    <property type="entry name" value="FtsK_alpha"/>
</dbReference>
<dbReference type="InterPro" id="IPR002543">
    <property type="entry name" value="FtsK_dom"/>
</dbReference>
<dbReference type="InterPro" id="IPR018541">
    <property type="entry name" value="Ftsk_gamma"/>
</dbReference>
<dbReference type="InterPro" id="IPR027417">
    <property type="entry name" value="P-loop_NTPase"/>
</dbReference>
<dbReference type="InterPro" id="IPR036388">
    <property type="entry name" value="WH-like_DNA-bd_sf"/>
</dbReference>
<dbReference type="InterPro" id="IPR036390">
    <property type="entry name" value="WH_DNA-bd_sf"/>
</dbReference>
<dbReference type="PANTHER" id="PTHR22683:SF41">
    <property type="entry name" value="DNA TRANSLOCASE FTSK"/>
    <property type="match status" value="1"/>
</dbReference>
<dbReference type="PANTHER" id="PTHR22683">
    <property type="entry name" value="SPORULATION PROTEIN RELATED"/>
    <property type="match status" value="1"/>
</dbReference>
<dbReference type="Pfam" id="PF13491">
    <property type="entry name" value="FtsK_4TM"/>
    <property type="match status" value="1"/>
</dbReference>
<dbReference type="Pfam" id="PF17854">
    <property type="entry name" value="FtsK_alpha"/>
    <property type="match status" value="1"/>
</dbReference>
<dbReference type="Pfam" id="PF09397">
    <property type="entry name" value="FtsK_gamma"/>
    <property type="match status" value="1"/>
</dbReference>
<dbReference type="Pfam" id="PF01580">
    <property type="entry name" value="FtsK_SpoIIIE"/>
    <property type="match status" value="1"/>
</dbReference>
<dbReference type="SMART" id="SM00843">
    <property type="entry name" value="Ftsk_gamma"/>
    <property type="match status" value="1"/>
</dbReference>
<dbReference type="SUPFAM" id="SSF52540">
    <property type="entry name" value="P-loop containing nucleoside triphosphate hydrolases"/>
    <property type="match status" value="1"/>
</dbReference>
<dbReference type="SUPFAM" id="SSF46785">
    <property type="entry name" value="Winged helix' DNA-binding domain"/>
    <property type="match status" value="1"/>
</dbReference>
<dbReference type="PROSITE" id="PS50901">
    <property type="entry name" value="FTSK"/>
    <property type="match status" value="1"/>
</dbReference>
<gene>
    <name type="primary">ftsK</name>
    <name type="ordered locus">SO_2306</name>
</gene>
<feature type="chain" id="PRO_0000098290" description="DNA translocase FtsK">
    <location>
        <begin position="1"/>
        <end position="911"/>
    </location>
</feature>
<feature type="transmembrane region" description="Helical" evidence="2">
    <location>
        <begin position="16"/>
        <end position="36"/>
    </location>
</feature>
<feature type="transmembrane region" description="Helical" evidence="2">
    <location>
        <begin position="64"/>
        <end position="84"/>
    </location>
</feature>
<feature type="transmembrane region" description="Helical" evidence="2">
    <location>
        <begin position="104"/>
        <end position="124"/>
    </location>
</feature>
<feature type="transmembrane region" description="Helical" evidence="2">
    <location>
        <begin position="131"/>
        <end position="151"/>
    </location>
</feature>
<feature type="transmembrane region" description="Helical" evidence="2">
    <location>
        <begin position="161"/>
        <end position="181"/>
    </location>
</feature>
<feature type="topological domain" description="Cytoplasmic" evidence="2">
    <location>
        <begin position="182"/>
        <end position="911"/>
    </location>
</feature>
<feature type="domain" description="FtsK" evidence="3">
    <location>
        <begin position="550"/>
        <end position="763"/>
    </location>
</feature>
<feature type="region of interest" description="Disordered" evidence="4">
    <location>
        <begin position="403"/>
        <end position="427"/>
    </location>
</feature>
<feature type="binding site" evidence="3">
    <location>
        <begin position="570"/>
        <end position="575"/>
    </location>
    <ligand>
        <name>ATP</name>
        <dbReference type="ChEBI" id="CHEBI:30616"/>
    </ligand>
</feature>
<name>FTSK_SHEON</name>
<reference key="1">
    <citation type="journal article" date="2002" name="Nat. Biotechnol.">
        <title>Genome sequence of the dissimilatory metal ion-reducing bacterium Shewanella oneidensis.</title>
        <authorList>
            <person name="Heidelberg J.F."/>
            <person name="Paulsen I.T."/>
            <person name="Nelson K.E."/>
            <person name="Gaidos E.J."/>
            <person name="Nelson W.C."/>
            <person name="Read T.D."/>
            <person name="Eisen J.A."/>
            <person name="Seshadri R."/>
            <person name="Ward N.L."/>
            <person name="Methe B.A."/>
            <person name="Clayton R.A."/>
            <person name="Meyer T."/>
            <person name="Tsapin A."/>
            <person name="Scott J."/>
            <person name="Beanan M.J."/>
            <person name="Brinkac L.M."/>
            <person name="Daugherty S.C."/>
            <person name="DeBoy R.T."/>
            <person name="Dodson R.J."/>
            <person name="Durkin A.S."/>
            <person name="Haft D.H."/>
            <person name="Kolonay J.F."/>
            <person name="Madupu R."/>
            <person name="Peterson J.D."/>
            <person name="Umayam L.A."/>
            <person name="White O."/>
            <person name="Wolf A.M."/>
            <person name="Vamathevan J.J."/>
            <person name="Weidman J.F."/>
            <person name="Impraim M."/>
            <person name="Lee K."/>
            <person name="Berry K.J."/>
            <person name="Lee C."/>
            <person name="Mueller J."/>
            <person name="Khouri H.M."/>
            <person name="Gill J."/>
            <person name="Utterback T.R."/>
            <person name="McDonald L.A."/>
            <person name="Feldblyum T.V."/>
            <person name="Smith H.O."/>
            <person name="Venter J.C."/>
            <person name="Nealson K.H."/>
            <person name="Fraser C.M."/>
        </authorList>
    </citation>
    <scope>NUCLEOTIDE SEQUENCE [LARGE SCALE GENOMIC DNA]</scope>
    <source>
        <strain>ATCC 700550 / JCM 31522 / CIP 106686 / LMG 19005 / NCIMB 14063 / MR-1</strain>
    </source>
</reference>
<sequence>MSQGNSVRTLSGLQRLLEGGLIICCVLAAYILLALTSFSPSDPGWSQSHFQGDIKNWTGAVGAWIADILLYFFGVTAYIMPIIVASTGWLLFKRAHDLLEIDYFSVALRIIGFLLLILGFSALASMNANNIYEFSAGGVAGDVIGQAMLPYFNKLGTTLLLLCFLGSGFTLLTGISWLTVVEKIGFVSIWSFKQLKRLPQALKREHETEDTRGFMSVVDKFKERRDSQHVLDKAKARQPAETPSRVLHTRAIPEESHEEFITEASSGKGKLSSLVKILSFNSNKAKDEPKSQQRVEPQLDQASAVAEYGHFEAPPWVAKSHDAELDDVDTGLNAEFFEDDDGDEPVFHRETMIDEDDDTLSFNDDDVIDFDTKVSAGAVTQAQRQKQTPKAKIVDGIVVLPGQEDKPVPTKPMDPLPSVSLLDVPDRKKNPISPEELEQVARLVEAKLADFNIVATVVGVYPGPVITRFELELAPGIKASKISNLANDLARSLLAERVRVVEVIPGKSYVGLELPNKFRETVYMRDVLDCEAFSQSKSNLTMVLGQDISGEPVVVDLGKMPHLLVAGTTGSGKSVGVNVMITSLLYKSGPEDVRFIMIDPKMLELSVYEGIPHLLCEVVTDMKEAANALRWCVGEMERRYKLMSMMGVRNIKGYNAKIAEAKVNGEVIYDPMWKSSDSMEPEAPALDKLPSIVVVVDEFADMMMIVGKKVEELIARIAQKARAAGIHLILATQRPSVDVITGLIKANIPTRMAFQVSSRIDSRTILDQQGAETLLGMGDMLYLPPGTAVPNRVHGAFIDDHEVHRVVADWCARGKPQYIDEILNGVSEGEQVLLPGETAESDEEYDPLYDEAVAFVTETRRGSISSVQRKFKIGYNRAARIIEQMEMQGVVSAQGHNGNREVLAPPAPKHY</sequence>